<protein>
    <recommendedName>
        <fullName>Pre-mRNA-splicing factor SLT11</fullName>
    </recommendedName>
</protein>
<evidence type="ECO:0000250" key="1"/>
<evidence type="ECO:0000255" key="2">
    <source>
        <dbReference type="PROSITE-ProRule" id="PRU00176"/>
    </source>
</evidence>
<evidence type="ECO:0000256" key="3">
    <source>
        <dbReference type="SAM" id="MobiDB-lite"/>
    </source>
</evidence>
<evidence type="ECO:0000305" key="4"/>
<reference key="1">
    <citation type="journal article" date="2004" name="Nature">
        <title>Genome evolution in yeasts.</title>
        <authorList>
            <person name="Dujon B."/>
            <person name="Sherman D."/>
            <person name="Fischer G."/>
            <person name="Durrens P."/>
            <person name="Casaregola S."/>
            <person name="Lafontaine I."/>
            <person name="de Montigny J."/>
            <person name="Marck C."/>
            <person name="Neuveglise C."/>
            <person name="Talla E."/>
            <person name="Goffard N."/>
            <person name="Frangeul L."/>
            <person name="Aigle M."/>
            <person name="Anthouard V."/>
            <person name="Babour A."/>
            <person name="Barbe V."/>
            <person name="Barnay S."/>
            <person name="Blanchin S."/>
            <person name="Beckerich J.-M."/>
            <person name="Beyne E."/>
            <person name="Bleykasten C."/>
            <person name="Boisrame A."/>
            <person name="Boyer J."/>
            <person name="Cattolico L."/>
            <person name="Confanioleri F."/>
            <person name="de Daruvar A."/>
            <person name="Despons L."/>
            <person name="Fabre E."/>
            <person name="Fairhead C."/>
            <person name="Ferry-Dumazet H."/>
            <person name="Groppi A."/>
            <person name="Hantraye F."/>
            <person name="Hennequin C."/>
            <person name="Jauniaux N."/>
            <person name="Joyet P."/>
            <person name="Kachouri R."/>
            <person name="Kerrest A."/>
            <person name="Koszul R."/>
            <person name="Lemaire M."/>
            <person name="Lesur I."/>
            <person name="Ma L."/>
            <person name="Muller H."/>
            <person name="Nicaud J.-M."/>
            <person name="Nikolski M."/>
            <person name="Oztas S."/>
            <person name="Ozier-Kalogeropoulos O."/>
            <person name="Pellenz S."/>
            <person name="Potier S."/>
            <person name="Richard G.-F."/>
            <person name="Straub M.-L."/>
            <person name="Suleau A."/>
            <person name="Swennen D."/>
            <person name="Tekaia F."/>
            <person name="Wesolowski-Louvel M."/>
            <person name="Westhof E."/>
            <person name="Wirth B."/>
            <person name="Zeniou-Meyer M."/>
            <person name="Zivanovic Y."/>
            <person name="Bolotin-Fukuhara M."/>
            <person name="Thierry A."/>
            <person name="Bouchier C."/>
            <person name="Caudron B."/>
            <person name="Scarpelli C."/>
            <person name="Gaillardin C."/>
            <person name="Weissenbach J."/>
            <person name="Wincker P."/>
            <person name="Souciet J.-L."/>
        </authorList>
    </citation>
    <scope>NUCLEOTIDE SEQUENCE [LARGE SCALE GENOMIC DNA]</scope>
    <source>
        <strain>CLIB 122 / E 150</strain>
    </source>
</reference>
<proteinExistence type="inferred from homology"/>
<gene>
    <name type="primary">SLT11</name>
    <name type="ordered locus">YALI0E33847g</name>
</gene>
<keyword id="KW-0507">mRNA processing</keyword>
<keyword id="KW-0508">mRNA splicing</keyword>
<keyword id="KW-0539">Nucleus</keyword>
<keyword id="KW-1185">Reference proteome</keyword>
<keyword id="KW-0694">RNA-binding</keyword>
<keyword id="KW-0747">Spliceosome</keyword>
<organism>
    <name type="scientific">Yarrowia lipolytica (strain CLIB 122 / E 150)</name>
    <name type="common">Yeast</name>
    <name type="synonym">Candida lipolytica</name>
    <dbReference type="NCBI Taxonomy" id="284591"/>
    <lineage>
        <taxon>Eukaryota</taxon>
        <taxon>Fungi</taxon>
        <taxon>Dikarya</taxon>
        <taxon>Ascomycota</taxon>
        <taxon>Saccharomycotina</taxon>
        <taxon>Dipodascomycetes</taxon>
        <taxon>Dipodascales</taxon>
        <taxon>Dipodascales incertae sedis</taxon>
        <taxon>Yarrowia</taxon>
    </lineage>
</organism>
<feature type="chain" id="PRO_0000212431" description="Pre-mRNA-splicing factor SLT11">
    <location>
        <begin position="1"/>
        <end position="356"/>
    </location>
</feature>
<feature type="domain" description="RRM" evidence="2">
    <location>
        <begin position="223"/>
        <end position="298"/>
    </location>
</feature>
<feature type="region of interest" description="Disordered" evidence="3">
    <location>
        <begin position="321"/>
        <end position="356"/>
    </location>
</feature>
<feature type="compositionally biased region" description="Polar residues" evidence="3">
    <location>
        <begin position="347"/>
        <end position="356"/>
    </location>
</feature>
<sequence length="356" mass="38757">MQTTKSDTNKITWEDTEVPAVCTQCLGANPYIRMTKEKYGAECKMCTRPFTVFRWQPERAQKGSSRGKPLKTNVCLTCSRQKNCCQSCSLDLTYGLPLAIRDAALKMEQEGGGGGLSLSSSSNTITKQFIAQNYEEQLKQDQRLLTDNSVTGTGKAQSAAKGLLKQLANAMPYRKELYEKGQKDKRPADSRDSKALTADVTKIASKLPLTGSTTPVPKDASIKSLFFMGVEDDLPEHVIRKHFTETGGTISLLTVVHRAHCGYVVFETRAAAEKAAAAISGGRLVLNGCRLRVAWGKPRNLGSSSDEQWKLGQMIKKYLRSKGGSSNKDGAAGRDEAAPPPPGQGIKYQSQGNIEL</sequence>
<comment type="function">
    <text evidence="1">Involved in pre-mRNA splicing. Facilitates the cooperative formation of U2/U6 helix II in association with stem II in the spliceosome. Binds to RNA (By similarity).</text>
</comment>
<comment type="subunit">
    <text evidence="1">Associated with the spliceosome.</text>
</comment>
<comment type="subcellular location">
    <subcellularLocation>
        <location evidence="1">Nucleus</location>
    </subcellularLocation>
</comment>
<comment type="similarity">
    <text evidence="4">Belongs to the SLT11 family.</text>
</comment>
<accession>Q6C3L4</accession>
<name>SLT11_YARLI</name>
<dbReference type="EMBL" id="CR382131">
    <property type="protein sequence ID" value="CAG80353.1"/>
    <property type="molecule type" value="Genomic_DNA"/>
</dbReference>
<dbReference type="RefSeq" id="XP_504748.1">
    <property type="nucleotide sequence ID" value="XM_504748.1"/>
</dbReference>
<dbReference type="SMR" id="Q6C3L4"/>
<dbReference type="FunCoup" id="Q6C3L4">
    <property type="interactions" value="140"/>
</dbReference>
<dbReference type="STRING" id="284591.Q6C3L4"/>
<dbReference type="EnsemblFungi" id="CAG80353">
    <property type="protein sequence ID" value="CAG80353"/>
    <property type="gene ID" value="YALI0_E33847g"/>
</dbReference>
<dbReference type="KEGG" id="yli:2912833"/>
<dbReference type="VEuPathDB" id="FungiDB:YALI0_E33847g"/>
<dbReference type="HOGENOM" id="CLU_027112_0_0_1"/>
<dbReference type="InParanoid" id="Q6C3L4"/>
<dbReference type="OMA" id="CPLRVQW"/>
<dbReference type="OrthoDB" id="93494at4891"/>
<dbReference type="Proteomes" id="UP000001300">
    <property type="component" value="Chromosome E"/>
</dbReference>
<dbReference type="GO" id="GO:0071014">
    <property type="term" value="C:post-mRNA release spliceosomal complex"/>
    <property type="evidence" value="ECO:0007669"/>
    <property type="project" value="EnsemblFungi"/>
</dbReference>
<dbReference type="GO" id="GO:0000974">
    <property type="term" value="C:Prp19 complex"/>
    <property type="evidence" value="ECO:0000318"/>
    <property type="project" value="GO_Central"/>
</dbReference>
<dbReference type="GO" id="GO:0071006">
    <property type="term" value="C:U2-type catalytic step 1 spliceosome"/>
    <property type="evidence" value="ECO:0000318"/>
    <property type="project" value="GO_Central"/>
</dbReference>
<dbReference type="GO" id="GO:0071007">
    <property type="term" value="C:U2-type catalytic step 2 spliceosome"/>
    <property type="evidence" value="ECO:0000318"/>
    <property type="project" value="GO_Central"/>
</dbReference>
<dbReference type="GO" id="GO:0036002">
    <property type="term" value="F:pre-mRNA binding"/>
    <property type="evidence" value="ECO:0000318"/>
    <property type="project" value="GO_Central"/>
</dbReference>
<dbReference type="GO" id="GO:0017070">
    <property type="term" value="F:U6 snRNA binding"/>
    <property type="evidence" value="ECO:0000318"/>
    <property type="project" value="GO_Central"/>
</dbReference>
<dbReference type="GO" id="GO:0006397">
    <property type="term" value="P:mRNA processing"/>
    <property type="evidence" value="ECO:0007669"/>
    <property type="project" value="UniProtKB-KW"/>
</dbReference>
<dbReference type="GO" id="GO:0008380">
    <property type="term" value="P:RNA splicing"/>
    <property type="evidence" value="ECO:0007669"/>
    <property type="project" value="UniProtKB-KW"/>
</dbReference>
<dbReference type="CDD" id="cd12265">
    <property type="entry name" value="RRM_SLT11"/>
    <property type="match status" value="1"/>
</dbReference>
<dbReference type="FunFam" id="3.30.70.330:FF:000396">
    <property type="entry name" value="Putative Pre-mRNA-splicing factor slt11"/>
    <property type="match status" value="1"/>
</dbReference>
<dbReference type="Gene3D" id="3.30.70.330">
    <property type="match status" value="1"/>
</dbReference>
<dbReference type="InterPro" id="IPR039171">
    <property type="entry name" value="Cwc2/Slt11"/>
</dbReference>
<dbReference type="InterPro" id="IPR012677">
    <property type="entry name" value="Nucleotide-bd_a/b_plait_sf"/>
</dbReference>
<dbReference type="InterPro" id="IPR035979">
    <property type="entry name" value="RBD_domain_sf"/>
</dbReference>
<dbReference type="InterPro" id="IPR000504">
    <property type="entry name" value="RRM_dom"/>
</dbReference>
<dbReference type="InterPro" id="IPR034356">
    <property type="entry name" value="Slt11_RRM"/>
</dbReference>
<dbReference type="InterPro" id="IPR048995">
    <property type="entry name" value="STL11/RBM22-like_N"/>
</dbReference>
<dbReference type="PANTHER" id="PTHR14089">
    <property type="entry name" value="PRE-MRNA-SPLICING FACTOR RBM22"/>
    <property type="match status" value="1"/>
</dbReference>
<dbReference type="PANTHER" id="PTHR14089:SF6">
    <property type="entry name" value="PRE-MRNA-SPLICING FACTOR RBM22"/>
    <property type="match status" value="1"/>
</dbReference>
<dbReference type="Pfam" id="PF21369">
    <property type="entry name" value="STL11_N"/>
    <property type="match status" value="1"/>
</dbReference>
<dbReference type="SMART" id="SM00360">
    <property type="entry name" value="RRM"/>
    <property type="match status" value="1"/>
</dbReference>
<dbReference type="SUPFAM" id="SSF54928">
    <property type="entry name" value="RNA-binding domain, RBD"/>
    <property type="match status" value="1"/>
</dbReference>
<dbReference type="PROSITE" id="PS50102">
    <property type="entry name" value="RRM"/>
    <property type="match status" value="1"/>
</dbReference>